<sequence>MAGKHEGSGEKTLYCSFCGKSQHEVRKLIAGPSVFICDECIELCNDIVKDEILDDHSEAQDKLPKPMEIRKTLDDYVIGQDVAKKVLSVAVYNHYKRLEHGGKDNEVELDKSNILLIGPTGSGKTLLAQTLARLLNVPFAMADATTLTEAGYVGEDVENIIQKLLQKCDYDVEKAQTGIVYIDEIDKITRKSENPSITRDVSGEGVQQALLKLIEGTVASVPPQGGRKHPQQEFLQVDTRHILFICGGAFAGLEKSVSARLEKGGMGFNAPLKRRDKEATAAMLMQNLEPEDLVRYGLIPEFVGRLPILALLEELDEEALISILTDPKNALVKQYQKLFALEGVTLEFRTEALRAIAKKALARKTGARGLRSILEQILLDTMYELPSMSGVKKVVVDAAVVESGTKPLLVYDDAAKVDMSHPA</sequence>
<dbReference type="EMBL" id="CP001132">
    <property type="protein sequence ID" value="ACH83274.1"/>
    <property type="molecule type" value="Genomic_DNA"/>
</dbReference>
<dbReference type="RefSeq" id="WP_012536430.1">
    <property type="nucleotide sequence ID" value="NC_011206.1"/>
</dbReference>
<dbReference type="SMR" id="B5EQ29"/>
<dbReference type="GeneID" id="65280234"/>
<dbReference type="KEGG" id="afe:Lferr_1032"/>
<dbReference type="eggNOG" id="COG1219">
    <property type="taxonomic scope" value="Bacteria"/>
</dbReference>
<dbReference type="HOGENOM" id="CLU_014218_8_2_6"/>
<dbReference type="GO" id="GO:0009376">
    <property type="term" value="C:HslUV protease complex"/>
    <property type="evidence" value="ECO:0007669"/>
    <property type="project" value="TreeGrafter"/>
</dbReference>
<dbReference type="GO" id="GO:0005524">
    <property type="term" value="F:ATP binding"/>
    <property type="evidence" value="ECO:0007669"/>
    <property type="project" value="UniProtKB-UniRule"/>
</dbReference>
<dbReference type="GO" id="GO:0016887">
    <property type="term" value="F:ATP hydrolysis activity"/>
    <property type="evidence" value="ECO:0007669"/>
    <property type="project" value="InterPro"/>
</dbReference>
<dbReference type="GO" id="GO:0140662">
    <property type="term" value="F:ATP-dependent protein folding chaperone"/>
    <property type="evidence" value="ECO:0007669"/>
    <property type="project" value="InterPro"/>
</dbReference>
<dbReference type="GO" id="GO:0046983">
    <property type="term" value="F:protein dimerization activity"/>
    <property type="evidence" value="ECO:0007669"/>
    <property type="project" value="InterPro"/>
</dbReference>
<dbReference type="GO" id="GO:0051082">
    <property type="term" value="F:unfolded protein binding"/>
    <property type="evidence" value="ECO:0007669"/>
    <property type="project" value="UniProtKB-UniRule"/>
</dbReference>
<dbReference type="GO" id="GO:0008270">
    <property type="term" value="F:zinc ion binding"/>
    <property type="evidence" value="ECO:0007669"/>
    <property type="project" value="InterPro"/>
</dbReference>
<dbReference type="GO" id="GO:0051301">
    <property type="term" value="P:cell division"/>
    <property type="evidence" value="ECO:0007669"/>
    <property type="project" value="TreeGrafter"/>
</dbReference>
<dbReference type="GO" id="GO:0051603">
    <property type="term" value="P:proteolysis involved in protein catabolic process"/>
    <property type="evidence" value="ECO:0007669"/>
    <property type="project" value="TreeGrafter"/>
</dbReference>
<dbReference type="CDD" id="cd19497">
    <property type="entry name" value="RecA-like_ClpX"/>
    <property type="match status" value="1"/>
</dbReference>
<dbReference type="FunFam" id="1.10.8.60:FF:000002">
    <property type="entry name" value="ATP-dependent Clp protease ATP-binding subunit ClpX"/>
    <property type="match status" value="1"/>
</dbReference>
<dbReference type="FunFam" id="3.40.50.300:FF:000005">
    <property type="entry name" value="ATP-dependent Clp protease ATP-binding subunit ClpX"/>
    <property type="match status" value="1"/>
</dbReference>
<dbReference type="Gene3D" id="1.10.8.60">
    <property type="match status" value="1"/>
</dbReference>
<dbReference type="Gene3D" id="6.20.220.10">
    <property type="entry name" value="ClpX chaperone, C4-type zinc finger domain"/>
    <property type="match status" value="1"/>
</dbReference>
<dbReference type="Gene3D" id="3.40.50.300">
    <property type="entry name" value="P-loop containing nucleotide triphosphate hydrolases"/>
    <property type="match status" value="1"/>
</dbReference>
<dbReference type="HAMAP" id="MF_00175">
    <property type="entry name" value="ClpX"/>
    <property type="match status" value="1"/>
</dbReference>
<dbReference type="InterPro" id="IPR003593">
    <property type="entry name" value="AAA+_ATPase"/>
</dbReference>
<dbReference type="InterPro" id="IPR050052">
    <property type="entry name" value="ATP-dep_Clp_protease_ClpX"/>
</dbReference>
<dbReference type="InterPro" id="IPR003959">
    <property type="entry name" value="ATPase_AAA_core"/>
</dbReference>
<dbReference type="InterPro" id="IPR019489">
    <property type="entry name" value="Clp_ATPase_C"/>
</dbReference>
<dbReference type="InterPro" id="IPR004487">
    <property type="entry name" value="Clp_protease_ATP-bd_su_ClpX"/>
</dbReference>
<dbReference type="InterPro" id="IPR046425">
    <property type="entry name" value="ClpX_bact"/>
</dbReference>
<dbReference type="InterPro" id="IPR027417">
    <property type="entry name" value="P-loop_NTPase"/>
</dbReference>
<dbReference type="InterPro" id="IPR010603">
    <property type="entry name" value="Znf_CppX_C4"/>
</dbReference>
<dbReference type="InterPro" id="IPR038366">
    <property type="entry name" value="Znf_CppX_C4_sf"/>
</dbReference>
<dbReference type="NCBIfam" id="TIGR00382">
    <property type="entry name" value="clpX"/>
    <property type="match status" value="1"/>
</dbReference>
<dbReference type="NCBIfam" id="NF003745">
    <property type="entry name" value="PRK05342.1"/>
    <property type="match status" value="1"/>
</dbReference>
<dbReference type="PANTHER" id="PTHR48102:SF7">
    <property type="entry name" value="ATP-DEPENDENT CLP PROTEASE ATP-BINDING SUBUNIT CLPX-LIKE, MITOCHONDRIAL"/>
    <property type="match status" value="1"/>
</dbReference>
<dbReference type="PANTHER" id="PTHR48102">
    <property type="entry name" value="ATP-DEPENDENT CLP PROTEASE ATP-BINDING SUBUNIT CLPX-LIKE, MITOCHONDRIAL-RELATED"/>
    <property type="match status" value="1"/>
</dbReference>
<dbReference type="Pfam" id="PF07724">
    <property type="entry name" value="AAA_2"/>
    <property type="match status" value="1"/>
</dbReference>
<dbReference type="Pfam" id="PF10431">
    <property type="entry name" value="ClpB_D2-small"/>
    <property type="match status" value="1"/>
</dbReference>
<dbReference type="Pfam" id="PF06689">
    <property type="entry name" value="zf-C4_ClpX"/>
    <property type="match status" value="1"/>
</dbReference>
<dbReference type="SMART" id="SM00382">
    <property type="entry name" value="AAA"/>
    <property type="match status" value="1"/>
</dbReference>
<dbReference type="SMART" id="SM01086">
    <property type="entry name" value="ClpB_D2-small"/>
    <property type="match status" value="1"/>
</dbReference>
<dbReference type="SMART" id="SM00994">
    <property type="entry name" value="zf-C4_ClpX"/>
    <property type="match status" value="1"/>
</dbReference>
<dbReference type="SUPFAM" id="SSF57716">
    <property type="entry name" value="Glucocorticoid receptor-like (DNA-binding domain)"/>
    <property type="match status" value="1"/>
</dbReference>
<dbReference type="SUPFAM" id="SSF52540">
    <property type="entry name" value="P-loop containing nucleoside triphosphate hydrolases"/>
    <property type="match status" value="1"/>
</dbReference>
<dbReference type="PROSITE" id="PS51902">
    <property type="entry name" value="CLPX_ZB"/>
    <property type="match status" value="1"/>
</dbReference>
<comment type="function">
    <text evidence="1">ATP-dependent specificity component of the Clp protease. It directs the protease to specific substrates. Can perform chaperone functions in the absence of ClpP.</text>
</comment>
<comment type="subunit">
    <text evidence="1">Component of the ClpX-ClpP complex. Forms a hexameric ring that, in the presence of ATP, binds to fourteen ClpP subunits assembled into a disk-like structure with a central cavity, resembling the structure of eukaryotic proteasomes.</text>
</comment>
<comment type="similarity">
    <text evidence="1">Belongs to the ClpX chaperone family.</text>
</comment>
<protein>
    <recommendedName>
        <fullName evidence="1">ATP-dependent Clp protease ATP-binding subunit ClpX</fullName>
    </recommendedName>
</protein>
<name>CLPX_ACIF5</name>
<evidence type="ECO:0000255" key="1">
    <source>
        <dbReference type="HAMAP-Rule" id="MF_00175"/>
    </source>
</evidence>
<evidence type="ECO:0000255" key="2">
    <source>
        <dbReference type="PROSITE-ProRule" id="PRU01250"/>
    </source>
</evidence>
<reference key="1">
    <citation type="submission" date="2008-08" db="EMBL/GenBank/DDBJ databases">
        <title>Complete sequence of Acidithiobacillus ferrooxidans ATCC 53993.</title>
        <authorList>
            <person name="Lucas S."/>
            <person name="Copeland A."/>
            <person name="Lapidus A."/>
            <person name="Glavina del Rio T."/>
            <person name="Dalin E."/>
            <person name="Tice H."/>
            <person name="Bruce D."/>
            <person name="Goodwin L."/>
            <person name="Pitluck S."/>
            <person name="Sims D."/>
            <person name="Brettin T."/>
            <person name="Detter J.C."/>
            <person name="Han C."/>
            <person name="Kuske C.R."/>
            <person name="Larimer F."/>
            <person name="Land M."/>
            <person name="Hauser L."/>
            <person name="Kyrpides N."/>
            <person name="Lykidis A."/>
            <person name="Borole A.P."/>
        </authorList>
    </citation>
    <scope>NUCLEOTIDE SEQUENCE [LARGE SCALE GENOMIC DNA]</scope>
    <source>
        <strain>ATCC 53993 / BNL-5-31</strain>
    </source>
</reference>
<proteinExistence type="inferred from homology"/>
<accession>B5EQ29</accession>
<feature type="chain" id="PRO_1000189673" description="ATP-dependent Clp protease ATP-binding subunit ClpX">
    <location>
        <begin position="1"/>
        <end position="423"/>
    </location>
</feature>
<feature type="domain" description="ClpX-type ZB" evidence="2">
    <location>
        <begin position="3"/>
        <end position="56"/>
    </location>
</feature>
<feature type="binding site" evidence="2">
    <location>
        <position position="15"/>
    </location>
    <ligand>
        <name>Zn(2+)</name>
        <dbReference type="ChEBI" id="CHEBI:29105"/>
    </ligand>
</feature>
<feature type="binding site" evidence="2">
    <location>
        <position position="18"/>
    </location>
    <ligand>
        <name>Zn(2+)</name>
        <dbReference type="ChEBI" id="CHEBI:29105"/>
    </ligand>
</feature>
<feature type="binding site" evidence="2">
    <location>
        <position position="37"/>
    </location>
    <ligand>
        <name>Zn(2+)</name>
        <dbReference type="ChEBI" id="CHEBI:29105"/>
    </ligand>
</feature>
<feature type="binding site" evidence="2">
    <location>
        <position position="40"/>
    </location>
    <ligand>
        <name>Zn(2+)</name>
        <dbReference type="ChEBI" id="CHEBI:29105"/>
    </ligand>
</feature>
<feature type="binding site" evidence="1">
    <location>
        <begin position="119"/>
        <end position="126"/>
    </location>
    <ligand>
        <name>ATP</name>
        <dbReference type="ChEBI" id="CHEBI:30616"/>
    </ligand>
</feature>
<gene>
    <name evidence="1" type="primary">clpX</name>
    <name type="ordered locus">Lferr_1032</name>
</gene>
<organism>
    <name type="scientific">Acidithiobacillus ferrooxidans (strain ATCC 53993 / BNL-5-31)</name>
    <name type="common">Leptospirillum ferrooxidans (ATCC 53993)</name>
    <dbReference type="NCBI Taxonomy" id="380394"/>
    <lineage>
        <taxon>Bacteria</taxon>
        <taxon>Pseudomonadati</taxon>
        <taxon>Pseudomonadota</taxon>
        <taxon>Acidithiobacillia</taxon>
        <taxon>Acidithiobacillales</taxon>
        <taxon>Acidithiobacillaceae</taxon>
        <taxon>Acidithiobacillus</taxon>
    </lineage>
</organism>
<keyword id="KW-0067">ATP-binding</keyword>
<keyword id="KW-0143">Chaperone</keyword>
<keyword id="KW-0479">Metal-binding</keyword>
<keyword id="KW-0547">Nucleotide-binding</keyword>
<keyword id="KW-0862">Zinc</keyword>